<organism>
    <name type="scientific">Pseudomonas aeruginosa (strain ATCC 15692 / DSM 22644 / CIP 104116 / JCM 14847 / LMG 12228 / 1C / PRS 101 / PAO1)</name>
    <dbReference type="NCBI Taxonomy" id="208964"/>
    <lineage>
        <taxon>Bacteria</taxon>
        <taxon>Pseudomonadati</taxon>
        <taxon>Pseudomonadota</taxon>
        <taxon>Gammaproteobacteria</taxon>
        <taxon>Pseudomonadales</taxon>
        <taxon>Pseudomonadaceae</taxon>
        <taxon>Pseudomonas</taxon>
    </lineage>
</organism>
<protein>
    <recommendedName>
        <fullName evidence="9">HTH-type transcriptional regulator ExsA</fullName>
    </recommendedName>
</protein>
<feature type="chain" id="PRO_0000194511" description="HTH-type transcriptional regulator ExsA">
    <location>
        <begin position="1"/>
        <end position="278"/>
    </location>
</feature>
<feature type="domain" description="HTH araC/xylS-type" evidence="1">
    <location>
        <begin position="171"/>
        <end position="269"/>
    </location>
</feature>
<feature type="DNA-binding region" description="H-T-H motif" evidence="1">
    <location>
        <begin position="188"/>
        <end position="209"/>
    </location>
</feature>
<feature type="DNA-binding region" description="H-T-H motif" evidence="1">
    <location>
        <begin position="236"/>
        <end position="259"/>
    </location>
</feature>
<feature type="mutagenesis site" description="More than 90% attenuated transcriptional activation." evidence="6">
    <original>L</original>
    <variation>R</variation>
    <location>
        <position position="117"/>
    </location>
</feature>
<feature type="sequence conflict" description="In Ref. 1; AAA25816." evidence="10" ref="1">
    <original>AL</original>
    <variation>RV</variation>
    <location>
        <begin position="94"/>
        <end position="95"/>
    </location>
</feature>
<feature type="strand" evidence="11">
    <location>
        <begin position="13"/>
        <end position="17"/>
    </location>
</feature>
<feature type="strand" evidence="11">
    <location>
        <begin position="23"/>
        <end position="38"/>
    </location>
</feature>
<feature type="strand" evidence="11">
    <location>
        <begin position="40"/>
        <end position="43"/>
    </location>
</feature>
<feature type="strand" evidence="11">
    <location>
        <begin position="48"/>
        <end position="51"/>
    </location>
</feature>
<feature type="strand" evidence="11">
    <location>
        <begin position="56"/>
        <end position="59"/>
    </location>
</feature>
<feature type="strand" evidence="11">
    <location>
        <begin position="61"/>
        <end position="67"/>
    </location>
</feature>
<feature type="strand" evidence="11">
    <location>
        <begin position="73"/>
        <end position="80"/>
    </location>
</feature>
<feature type="helix" evidence="11">
    <location>
        <begin position="82"/>
        <end position="96"/>
    </location>
</feature>
<feature type="strand" evidence="11">
    <location>
        <begin position="108"/>
        <end position="111"/>
    </location>
</feature>
<feature type="helix" evidence="11">
    <location>
        <begin position="116"/>
        <end position="130"/>
    </location>
</feature>
<feature type="helix" evidence="11">
    <location>
        <begin position="136"/>
        <end position="151"/>
    </location>
</feature>
<feature type="helix" evidence="11">
    <location>
        <begin position="155"/>
        <end position="164"/>
    </location>
</feature>
<evidence type="ECO:0000255" key="1">
    <source>
        <dbReference type="PROSITE-ProRule" id="PRU00593"/>
    </source>
</evidence>
<evidence type="ECO:0000269" key="2">
    <source>
    </source>
</evidence>
<evidence type="ECO:0000269" key="3">
    <source>
    </source>
</evidence>
<evidence type="ECO:0000269" key="4">
    <source>
    </source>
</evidence>
<evidence type="ECO:0000269" key="5">
    <source>
    </source>
</evidence>
<evidence type="ECO:0000269" key="6">
    <source>
    </source>
</evidence>
<evidence type="ECO:0000269" key="7">
    <source>
    </source>
</evidence>
<evidence type="ECO:0000269" key="8">
    <source>
    </source>
</evidence>
<evidence type="ECO:0000303" key="9">
    <source>
    </source>
</evidence>
<evidence type="ECO:0000305" key="10"/>
<evidence type="ECO:0007829" key="11">
    <source>
        <dbReference type="PDB" id="4ZUA"/>
    </source>
</evidence>
<gene>
    <name type="primary">exsA</name>
    <name type="ordered locus">PA1713</name>
</gene>
<comment type="function">
    <text evidence="3 6 8">Transcriptional regulator that plays an essential role in the activation the type III secretion system (T3SS) operons (PubMed:1655713, PubMed:26317977). In addition, ExsA directly regulates the transcription of ImpA virulence factor that cooperatively inhibits the functions of host macrophages together with the T3SS (PubMed:31527124).</text>
</comment>
<comment type="activity regulation">
    <text evidence="2 4 5">In the absence of inducing signals such as low Ca(2+) or host cell contact, the T3SS/injectisome is expressed at a low basal level and exists in a quiescent state due to ExsA sequestration by ExsD in a 1:1 complex (PubMed:19369699, PubMed:20008065). Upon host cell contact, this interaction is disrupted by the anti-antiactivator protein ExsC leading to ExsA activation (PubMed:15225323).</text>
</comment>
<comment type="subunit">
    <text evidence="4 5 6">Homodimer (PubMed:26317977). Interacts with ExsD; this interaction inhibits ExsA activity (PubMed:19369699, PubMed:20008065).</text>
</comment>
<comment type="interaction">
    <interactant intactId="EBI-6307207">
        <id>P26993</id>
    </interactant>
    <interactant intactId="EBI-6409805">
        <id>Q9I321</id>
        <label>exsD</label>
    </interactant>
    <organismsDiffer>false</organismsDiffer>
    <experiments>2</experiments>
</comment>
<comment type="induction">
    <text evidence="7">By cAMP-dependent DNA-binding protein Vfr that directly activates exsA transcription from a promoter located immediately upstream of exsA.</text>
</comment>
<comment type="disruption phenotype">
    <text evidence="2">Deletion mutants are defective in expression and secretion of type III secretion system-related exoproducts.</text>
</comment>
<comment type="sequence caution" evidence="10">
    <conflict type="erroneous initiation">
        <sequence resource="EMBL-CDS" id="AAA25816"/>
    </conflict>
</comment>
<reference key="1">
    <citation type="journal article" date="1991" name="J. Bacteriol.">
        <title>Cloning and sequence analysis of a trans-regulatory locus required for exoenzyme S synthesis in Pseudomonas aeruginosa.</title>
        <authorList>
            <person name="Frank D.W."/>
            <person name="Iglewski B.H."/>
        </authorList>
    </citation>
    <scope>NUCLEOTIDE SEQUENCE [GENOMIC DNA]</scope>
    <scope>FUNCTION</scope>
    <source>
        <strain>ATCC 15692 / DSM 22644 / CIP 104116 / JCM 14847 / LMG 12228 / 1C / PRS 101 / PAO1</strain>
    </source>
</reference>
<reference key="2">
    <citation type="journal article" date="2000" name="Nature">
        <title>Complete genome sequence of Pseudomonas aeruginosa PAO1, an opportunistic pathogen.</title>
        <authorList>
            <person name="Stover C.K."/>
            <person name="Pham X.-Q.T."/>
            <person name="Erwin A.L."/>
            <person name="Mizoguchi S.D."/>
            <person name="Warrener P."/>
            <person name="Hickey M.J."/>
            <person name="Brinkman F.S.L."/>
            <person name="Hufnagle W.O."/>
            <person name="Kowalik D.J."/>
            <person name="Lagrou M."/>
            <person name="Garber R.L."/>
            <person name="Goltry L."/>
            <person name="Tolentino E."/>
            <person name="Westbrock-Wadman S."/>
            <person name="Yuan Y."/>
            <person name="Brody L.L."/>
            <person name="Coulter S.N."/>
            <person name="Folger K.R."/>
            <person name="Kas A."/>
            <person name="Larbig K."/>
            <person name="Lim R.M."/>
            <person name="Smith K.A."/>
            <person name="Spencer D.H."/>
            <person name="Wong G.K.-S."/>
            <person name="Wu Z."/>
            <person name="Paulsen I.T."/>
            <person name="Reizer J."/>
            <person name="Saier M.H. Jr."/>
            <person name="Hancock R.E.W."/>
            <person name="Lory S."/>
            <person name="Olson M.V."/>
        </authorList>
    </citation>
    <scope>NUCLEOTIDE SEQUENCE [LARGE SCALE GENOMIC DNA]</scope>
    <source>
        <strain>ATCC 15692 / DSM 22644 / CIP 104116 / JCM 14847 / LMG 12228 / 1C / PRS 101 / PAO1</strain>
    </source>
</reference>
<reference key="3">
    <citation type="journal article" date="2004" name="Mol. Microbiol.">
        <title>A novel anti-anti-activator mechanism regulates expression of the Pseudomonas aeruginosa type III secretion system.</title>
        <authorList>
            <person name="Dasgupta N."/>
            <person name="Lykken G.L."/>
            <person name="Wolfgang M.C."/>
            <person name="Yahr T.L."/>
        </authorList>
    </citation>
    <scope>ACTIVITY REGULATION</scope>
    <scope>DISRUPTION PHENOTYPE</scope>
</reference>
<reference key="4">
    <citation type="journal article" date="2009" name="J. Biol. Chem.">
        <title>Anti-activator ExsD forms a 1:1 complex with ExsA to inhibit transcription of type III secretion operons.</title>
        <authorList>
            <person name="Thibault J."/>
            <person name="Faudry E."/>
            <person name="Ebel C."/>
            <person name="Attree I."/>
            <person name="Elsen S."/>
        </authorList>
    </citation>
    <scope>ACTIVITY REGULATION</scope>
    <scope>INTERACTION WITH EXSD</scope>
</reference>
<reference key="5">
    <citation type="journal article" date="2010" name="J. Bacteriol.">
        <title>ExsD inhibits expression of the Pseudomonas aeruginosa type III secretion system by disrupting ExsA self-association and DNA binding activity.</title>
        <authorList>
            <person name="Brutinel E.D."/>
            <person name="Vakulskas C.A."/>
            <person name="Yahr T.L."/>
        </authorList>
    </citation>
    <scope>ACTIVITY REGULATION</scope>
    <scope>INTERACTION WITH EXSD</scope>
</reference>
<reference key="6">
    <citation type="journal article" date="2016" name="J. Bacteriol.">
        <title>Vfr Directly Activates exsA Transcription To Regulate Expression of the Pseudomonas aeruginosa Type III Secretion System.</title>
        <authorList>
            <person name="Marsden A.E."/>
            <person name="Intile P.J."/>
            <person name="Schulmeyer K.H."/>
            <person name="Simmons-Patterson E.R."/>
            <person name="Urbanowski M.L."/>
            <person name="Wolfgang M.C."/>
            <person name="Yahr T.L."/>
        </authorList>
    </citation>
    <scope>INDUCTION BY VRF</scope>
</reference>
<reference key="7">
    <citation type="journal article" date="2019" name="Infect. Immun.">
        <title>Pseudomonas aeruginosa ExsA Regulates a Metalloprotease, ImpA, That Inhibits Phagocytosis of Macrophages.</title>
        <authorList>
            <person name="Tian Z."/>
            <person name="Cheng S."/>
            <person name="Xia B."/>
            <person name="Jin Y."/>
            <person name="Bai F."/>
            <person name="Cheng Z."/>
            <person name="Jin S."/>
            <person name="Liu X."/>
            <person name="Wu W."/>
        </authorList>
    </citation>
    <scope>FUNCTION</scope>
    <scope>DNA-BINDING</scope>
    <source>
        <strain>PAK</strain>
    </source>
</reference>
<reference key="8">
    <citation type="journal article" date="2015" name="PLoS ONE">
        <title>Structural Analysis of the Regulatory Domain of ExsA, a Key Transcriptional Regulator of the Type Three Secretion System in Pseudomonas aeruginosa.</title>
        <authorList>
            <person name="Shrestha M."/>
            <person name="Xiao Y."/>
            <person name="Robinson H."/>
            <person name="Schubot F.D."/>
        </authorList>
    </citation>
    <scope>X-RAY CRYSTALLOGRAPHY (2.50 ANGSTROMS) OF 2-178</scope>
    <scope>SUBUNIT</scope>
    <scope>FUNCTION</scope>
    <scope>MUTAGENESIS OF LEU-117</scope>
</reference>
<dbReference type="EMBL" id="M64975">
    <property type="protein sequence ID" value="AAA25816.1"/>
    <property type="status" value="ALT_INIT"/>
    <property type="molecule type" value="Genomic_DNA"/>
</dbReference>
<dbReference type="EMBL" id="AE004091">
    <property type="protein sequence ID" value="AAG05102.1"/>
    <property type="molecule type" value="Genomic_DNA"/>
</dbReference>
<dbReference type="PIR" id="A83430">
    <property type="entry name" value="A83430"/>
</dbReference>
<dbReference type="PIR" id="C41047">
    <property type="entry name" value="C41047"/>
</dbReference>
<dbReference type="RefSeq" id="NP_250404.1">
    <property type="nucleotide sequence ID" value="NC_002516.2"/>
</dbReference>
<dbReference type="RefSeq" id="WP_003120334.1">
    <property type="nucleotide sequence ID" value="NZ_QZGE01000003.1"/>
</dbReference>
<dbReference type="PDB" id="4ZUA">
    <property type="method" value="X-ray"/>
    <property type="resolution" value="2.50 A"/>
    <property type="chains" value="A/B=2-178"/>
</dbReference>
<dbReference type="PDBsum" id="4ZUA"/>
<dbReference type="SMR" id="P26993"/>
<dbReference type="FunCoup" id="P26993">
    <property type="interactions" value="64"/>
</dbReference>
<dbReference type="IntAct" id="P26993">
    <property type="interactions" value="1"/>
</dbReference>
<dbReference type="MINT" id="P26993"/>
<dbReference type="STRING" id="208964.PA1713"/>
<dbReference type="BindingDB" id="P26993"/>
<dbReference type="ChEMBL" id="CHEMBL1075205"/>
<dbReference type="PaxDb" id="208964-PA1713"/>
<dbReference type="DNASU" id="879712"/>
<dbReference type="GeneID" id="879712"/>
<dbReference type="KEGG" id="pae:PA1713"/>
<dbReference type="PATRIC" id="fig|208964.12.peg.1775"/>
<dbReference type="PseudoCAP" id="PA1713"/>
<dbReference type="HOGENOM" id="CLU_073843_2_0_6"/>
<dbReference type="InParanoid" id="P26993"/>
<dbReference type="OrthoDB" id="9023142at2"/>
<dbReference type="PhylomeDB" id="P26993"/>
<dbReference type="BioCyc" id="PAER208964:G1FZ6-1744-MONOMER"/>
<dbReference type="EvolutionaryTrace" id="P26993"/>
<dbReference type="PHI-base" id="PHI:12233"/>
<dbReference type="PHI-base" id="PHI:6399"/>
<dbReference type="PHI-base" id="PHI:6992"/>
<dbReference type="PHI-base" id="PHI:8765"/>
<dbReference type="PRO" id="PR:P26993"/>
<dbReference type="Proteomes" id="UP000002438">
    <property type="component" value="Chromosome"/>
</dbReference>
<dbReference type="CollecTF" id="EXPREG_000009f0"/>
<dbReference type="GO" id="GO:0032993">
    <property type="term" value="C:protein-DNA complex"/>
    <property type="evidence" value="ECO:0000315"/>
    <property type="project" value="CollecTF"/>
</dbReference>
<dbReference type="GO" id="GO:0001216">
    <property type="term" value="F:DNA-binding transcription activator activity"/>
    <property type="evidence" value="ECO:0000315"/>
    <property type="project" value="CollecTF"/>
</dbReference>
<dbReference type="GO" id="GO:0043565">
    <property type="term" value="F:sequence-specific DNA binding"/>
    <property type="evidence" value="ECO:0000315"/>
    <property type="project" value="CollecTF"/>
</dbReference>
<dbReference type="GO" id="GO:0000976">
    <property type="term" value="F:transcription cis-regulatory region binding"/>
    <property type="evidence" value="ECO:0000315"/>
    <property type="project" value="CollecTF"/>
</dbReference>
<dbReference type="GO" id="GO:0050709">
    <property type="term" value="P:negative regulation of protein secretion"/>
    <property type="evidence" value="ECO:0000315"/>
    <property type="project" value="PseudoCAP"/>
</dbReference>
<dbReference type="GO" id="GO:2000144">
    <property type="term" value="P:positive regulation of DNA-templated transcription initiation"/>
    <property type="evidence" value="ECO:0000314"/>
    <property type="project" value="CACAO"/>
</dbReference>
<dbReference type="GO" id="GO:0006355">
    <property type="term" value="P:regulation of DNA-templated transcription"/>
    <property type="evidence" value="ECO:0000314"/>
    <property type="project" value="PseudoCAP"/>
</dbReference>
<dbReference type="FunFam" id="1.10.10.60:FF:000386">
    <property type="entry name" value="AraC family transcriptional regulator"/>
    <property type="match status" value="1"/>
</dbReference>
<dbReference type="Gene3D" id="1.10.10.60">
    <property type="entry name" value="Homeodomain-like"/>
    <property type="match status" value="1"/>
</dbReference>
<dbReference type="Gene3D" id="2.60.120.10">
    <property type="entry name" value="Jelly Rolls"/>
    <property type="match status" value="1"/>
</dbReference>
<dbReference type="InterPro" id="IPR054015">
    <property type="entry name" value="ExsA-like_N"/>
</dbReference>
<dbReference type="InterPro" id="IPR009057">
    <property type="entry name" value="Homeodomain-like_sf"/>
</dbReference>
<dbReference type="InterPro" id="IPR018060">
    <property type="entry name" value="HTH_AraC"/>
</dbReference>
<dbReference type="InterPro" id="IPR018062">
    <property type="entry name" value="HTH_AraC-typ_CS"/>
</dbReference>
<dbReference type="InterPro" id="IPR014710">
    <property type="entry name" value="RmlC-like_jellyroll"/>
</dbReference>
<dbReference type="InterPro" id="IPR020449">
    <property type="entry name" value="Tscrpt_reg_AraC-type_HTH"/>
</dbReference>
<dbReference type="PANTHER" id="PTHR43280">
    <property type="entry name" value="ARAC-FAMILY TRANSCRIPTIONAL REGULATOR"/>
    <property type="match status" value="1"/>
</dbReference>
<dbReference type="PANTHER" id="PTHR43280:SF2">
    <property type="entry name" value="HTH-TYPE TRANSCRIPTIONAL REGULATOR EXSA"/>
    <property type="match status" value="1"/>
</dbReference>
<dbReference type="Pfam" id="PF22200">
    <property type="entry name" value="ExsA_N"/>
    <property type="match status" value="1"/>
</dbReference>
<dbReference type="Pfam" id="PF12833">
    <property type="entry name" value="HTH_18"/>
    <property type="match status" value="1"/>
</dbReference>
<dbReference type="PRINTS" id="PR00032">
    <property type="entry name" value="HTHARAC"/>
</dbReference>
<dbReference type="SMART" id="SM00342">
    <property type="entry name" value="HTH_ARAC"/>
    <property type="match status" value="1"/>
</dbReference>
<dbReference type="SUPFAM" id="SSF46689">
    <property type="entry name" value="Homeodomain-like"/>
    <property type="match status" value="2"/>
</dbReference>
<dbReference type="PROSITE" id="PS00041">
    <property type="entry name" value="HTH_ARAC_FAMILY_1"/>
    <property type="match status" value="1"/>
</dbReference>
<dbReference type="PROSITE" id="PS01124">
    <property type="entry name" value="HTH_ARAC_FAMILY_2"/>
    <property type="match status" value="1"/>
</dbReference>
<proteinExistence type="evidence at protein level"/>
<accession>P26993</accession>
<sequence length="278" mass="31642">MQGAKSLGRKQITSCHWNIPTFEYRVNKEEGVYVLLEGELTVQDIDSTFCLAPGELLFVRRGSYVVSTKGKDSRILWIPLSAQFLQGFVQRFGALLSEVERCDEPVPGIIAFAATPLLAGCVKGLKELLVHEHPPMLACLKIEELLMLFAFSPQGPLLMSVLRQLSNRHVERLQLFMEKHYLNEWKLSDFSREFGMGLTTFKELFGSVYGVSPRAWISERRILYAHQLLLNSDMSIVDIAMEAGFSSQSYFTQSYRRRFGCTPSRSRQGKDECRAKNN</sequence>
<name>EXSA_PSEAE</name>
<keyword id="KW-0002">3D-structure</keyword>
<keyword id="KW-0010">Activator</keyword>
<keyword id="KW-0238">DNA-binding</keyword>
<keyword id="KW-1185">Reference proteome</keyword>
<keyword id="KW-0804">Transcription</keyword>
<keyword id="KW-0805">Transcription regulation</keyword>